<keyword id="KW-0963">Cytoplasm</keyword>
<keyword id="KW-0560">Oxidoreductase</keyword>
<keyword id="KW-0575">Peroxidase</keyword>
<keyword id="KW-1185">Reference proteome</keyword>
<gene>
    <name type="primary">GPXle-1</name>
</gene>
<name>GPX4_SOLLC</name>
<accession>O24031</accession>
<feature type="chain" id="PRO_0000066631" description="Probable phospholipid hydroperoxide glutathione peroxidase">
    <location>
        <begin position="1"/>
        <end position="169"/>
    </location>
</feature>
<feature type="active site" evidence="2">
    <location>
        <position position="43"/>
    </location>
</feature>
<protein>
    <recommendedName>
        <fullName>Probable phospholipid hydroperoxide glutathione peroxidase</fullName>
        <shortName>PHGPx</shortName>
        <ecNumber>1.11.1.12</ecNumber>
    </recommendedName>
</protein>
<reference key="1">
    <citation type="journal article" date="1998" name="Eur. J. Biochem.">
        <title>Molecular cloning and characterization of tomato cDNAs encoding glutathione peroxidase-like proteins.</title>
        <authorList>
            <person name="Depege N."/>
            <person name="Drevet J."/>
            <person name="Boyer N."/>
        </authorList>
    </citation>
    <scope>NUCLEOTIDE SEQUENCE [MRNA]</scope>
    <source>
        <strain>cv. VFN8</strain>
    </source>
</reference>
<evidence type="ECO:0000250" key="1">
    <source>
        <dbReference type="UniProtKB" id="O70325"/>
    </source>
</evidence>
<evidence type="ECO:0000250" key="2">
    <source>
        <dbReference type="UniProtKB" id="P36968"/>
    </source>
</evidence>
<evidence type="ECO:0000250" key="3">
    <source>
        <dbReference type="UniProtKB" id="P36969"/>
    </source>
</evidence>
<evidence type="ECO:0000305" key="4"/>
<organism>
    <name type="scientific">Solanum lycopersicum</name>
    <name type="common">Tomato</name>
    <name type="synonym">Lycopersicon esculentum</name>
    <dbReference type="NCBI Taxonomy" id="4081"/>
    <lineage>
        <taxon>Eukaryota</taxon>
        <taxon>Viridiplantae</taxon>
        <taxon>Streptophyta</taxon>
        <taxon>Embryophyta</taxon>
        <taxon>Tracheophyta</taxon>
        <taxon>Spermatophyta</taxon>
        <taxon>Magnoliopsida</taxon>
        <taxon>eudicotyledons</taxon>
        <taxon>Gunneridae</taxon>
        <taxon>Pentapetalae</taxon>
        <taxon>asterids</taxon>
        <taxon>lamiids</taxon>
        <taxon>Solanales</taxon>
        <taxon>Solanaceae</taxon>
        <taxon>Solanoideae</taxon>
        <taxon>Solaneae</taxon>
        <taxon>Solanum</taxon>
        <taxon>Solanum subgen. Lycopersicon</taxon>
    </lineage>
</organism>
<proteinExistence type="evidence at transcript level"/>
<comment type="function">
    <text evidence="1">Protects cells and enzymes from oxidative damage, by catalyzing the reduction of hydrogen peroxide, lipid peroxides and organic hydroperoxide, by glutathione.</text>
</comment>
<comment type="catalytic activity">
    <reaction evidence="2">
        <text>a hydroperoxy polyunsaturated fatty acid + 2 glutathione = a hydroxy polyunsaturated fatty acid + glutathione disulfide + H2O</text>
        <dbReference type="Rhea" id="RHEA:19057"/>
        <dbReference type="ChEBI" id="CHEBI:15377"/>
        <dbReference type="ChEBI" id="CHEBI:57925"/>
        <dbReference type="ChEBI" id="CHEBI:58297"/>
        <dbReference type="ChEBI" id="CHEBI:131871"/>
        <dbReference type="ChEBI" id="CHEBI:134019"/>
        <dbReference type="EC" id="1.11.1.12"/>
    </reaction>
</comment>
<comment type="subunit">
    <text evidence="3">Monomer. Has a tendency to form higher mass oligomers. Interacts with FUNDC1; this interaction promotes GPX4 recruitment into mitochondria through TOM/TIM complex where it is degraded by mitophagy.</text>
</comment>
<comment type="subcellular location">
    <subcellularLocation>
        <location evidence="4">Cytoplasm</location>
    </subcellularLocation>
</comment>
<comment type="similarity">
    <text evidence="4">Belongs to the glutathione peroxidase family.</text>
</comment>
<sequence length="169" mass="18847">MATQTSNPQSVYDFTVKDAKGKDVDLSIYKGKVLIIVNVASQCGLTNSNYTDMTELYKKYKDQGLEILAFPCNQFGGQEPGNIEDIQQMVCTRFKAEYPIFDKVDVNGDNAAPLYRFLKSSKGGFFGDGIKWNFSKFLIDKEGHVVDRYSPTTSPASMEKDIKKLLGVA</sequence>
<dbReference type="EC" id="1.11.1.12"/>
<dbReference type="EMBL" id="Y14762">
    <property type="protein sequence ID" value="CAA75054.1"/>
    <property type="molecule type" value="mRNA"/>
</dbReference>
<dbReference type="SMR" id="O24031"/>
<dbReference type="FunCoup" id="O24031">
    <property type="interactions" value="1748"/>
</dbReference>
<dbReference type="STRING" id="4081.O24031"/>
<dbReference type="PeroxiBase" id="2665">
    <property type="entry name" value="LeGPx06"/>
</dbReference>
<dbReference type="PaxDb" id="4081-Solyc08g080940.2.1"/>
<dbReference type="eggNOG" id="KOG1651">
    <property type="taxonomic scope" value="Eukaryota"/>
</dbReference>
<dbReference type="InParanoid" id="O24031"/>
<dbReference type="Proteomes" id="UP000004994">
    <property type="component" value="Unplaced"/>
</dbReference>
<dbReference type="ExpressionAtlas" id="O24031">
    <property type="expression patterns" value="baseline and differential"/>
</dbReference>
<dbReference type="GO" id="GO:0005829">
    <property type="term" value="C:cytosol"/>
    <property type="evidence" value="ECO:0000318"/>
    <property type="project" value="GO_Central"/>
</dbReference>
<dbReference type="GO" id="GO:0004601">
    <property type="term" value="F:peroxidase activity"/>
    <property type="evidence" value="ECO:0000318"/>
    <property type="project" value="GO_Central"/>
</dbReference>
<dbReference type="GO" id="GO:0047066">
    <property type="term" value="F:phospholipid-hydroperoxide glutathione peroxidase activity"/>
    <property type="evidence" value="ECO:0007669"/>
    <property type="project" value="UniProtKB-EC"/>
</dbReference>
<dbReference type="GO" id="GO:0006979">
    <property type="term" value="P:response to oxidative stress"/>
    <property type="evidence" value="ECO:0007669"/>
    <property type="project" value="InterPro"/>
</dbReference>
<dbReference type="CDD" id="cd00340">
    <property type="entry name" value="GSH_Peroxidase"/>
    <property type="match status" value="1"/>
</dbReference>
<dbReference type="FunFam" id="3.40.30.10:FF:000025">
    <property type="entry name" value="Glutathione peroxidase"/>
    <property type="match status" value="1"/>
</dbReference>
<dbReference type="Gene3D" id="3.40.30.10">
    <property type="entry name" value="Glutaredoxin"/>
    <property type="match status" value="1"/>
</dbReference>
<dbReference type="InterPro" id="IPR000889">
    <property type="entry name" value="Glutathione_peroxidase"/>
</dbReference>
<dbReference type="InterPro" id="IPR029759">
    <property type="entry name" value="GPX_AS"/>
</dbReference>
<dbReference type="InterPro" id="IPR029760">
    <property type="entry name" value="GPX_CS"/>
</dbReference>
<dbReference type="InterPro" id="IPR036249">
    <property type="entry name" value="Thioredoxin-like_sf"/>
</dbReference>
<dbReference type="InterPro" id="IPR013766">
    <property type="entry name" value="Thioredoxin_domain"/>
</dbReference>
<dbReference type="PANTHER" id="PTHR11592">
    <property type="entry name" value="GLUTATHIONE PEROXIDASE"/>
    <property type="match status" value="1"/>
</dbReference>
<dbReference type="PANTHER" id="PTHR11592:SF92">
    <property type="entry name" value="PHOSPHOLIPID HYDROPEROXIDE GLUTATHIONE PEROXIDASE-RELATED"/>
    <property type="match status" value="1"/>
</dbReference>
<dbReference type="Pfam" id="PF00255">
    <property type="entry name" value="GSHPx"/>
    <property type="match status" value="1"/>
</dbReference>
<dbReference type="PIRSF" id="PIRSF000303">
    <property type="entry name" value="Glutathion_perox"/>
    <property type="match status" value="1"/>
</dbReference>
<dbReference type="PRINTS" id="PR01011">
    <property type="entry name" value="GLUTPROXDASE"/>
</dbReference>
<dbReference type="SUPFAM" id="SSF52833">
    <property type="entry name" value="Thioredoxin-like"/>
    <property type="match status" value="1"/>
</dbReference>
<dbReference type="PROSITE" id="PS00460">
    <property type="entry name" value="GLUTATHIONE_PEROXID_1"/>
    <property type="match status" value="1"/>
</dbReference>
<dbReference type="PROSITE" id="PS00763">
    <property type="entry name" value="GLUTATHIONE_PEROXID_2"/>
    <property type="match status" value="1"/>
</dbReference>
<dbReference type="PROSITE" id="PS51355">
    <property type="entry name" value="GLUTATHIONE_PEROXID_3"/>
    <property type="match status" value="1"/>
</dbReference>